<feature type="chain" id="PRO_1000127311" description="Large ribosomal subunit protein bL35">
    <location>
        <begin position="1"/>
        <end position="66"/>
    </location>
</feature>
<gene>
    <name evidence="1" type="primary">rpmI</name>
    <name type="ordered locus">BbuZS7_0189</name>
</gene>
<protein>
    <recommendedName>
        <fullName evidence="1">Large ribosomal subunit protein bL35</fullName>
    </recommendedName>
    <alternativeName>
        <fullName evidence="2">50S ribosomal protein L35</fullName>
    </alternativeName>
</protein>
<accession>B7J1C2</accession>
<sequence length="66" mass="7816">MANKMKTRKSAKKRYSFTVNGKVKYKKQNLRHILTKKSSKRKRNLRKSGNLSCFEVKRIKTLLPYG</sequence>
<organism>
    <name type="scientific">Borreliella burgdorferi (strain ZS7)</name>
    <name type="common">Borrelia burgdorferi</name>
    <dbReference type="NCBI Taxonomy" id="445985"/>
    <lineage>
        <taxon>Bacteria</taxon>
        <taxon>Pseudomonadati</taxon>
        <taxon>Spirochaetota</taxon>
        <taxon>Spirochaetia</taxon>
        <taxon>Spirochaetales</taxon>
        <taxon>Borreliaceae</taxon>
        <taxon>Borreliella</taxon>
    </lineage>
</organism>
<comment type="similarity">
    <text evidence="1">Belongs to the bacterial ribosomal protein bL35 family.</text>
</comment>
<reference key="1">
    <citation type="journal article" date="2011" name="J. Bacteriol.">
        <title>Whole-genome sequences of thirteen isolates of Borrelia burgdorferi.</title>
        <authorList>
            <person name="Schutzer S.E."/>
            <person name="Fraser-Liggett C.M."/>
            <person name="Casjens S.R."/>
            <person name="Qiu W.G."/>
            <person name="Dunn J.J."/>
            <person name="Mongodin E.F."/>
            <person name="Luft B.J."/>
        </authorList>
    </citation>
    <scope>NUCLEOTIDE SEQUENCE [LARGE SCALE GENOMIC DNA]</scope>
    <source>
        <strain>ZS7</strain>
    </source>
</reference>
<evidence type="ECO:0000255" key="1">
    <source>
        <dbReference type="HAMAP-Rule" id="MF_00514"/>
    </source>
</evidence>
<evidence type="ECO:0000305" key="2"/>
<name>RL35_BORBZ</name>
<keyword id="KW-0687">Ribonucleoprotein</keyword>
<keyword id="KW-0689">Ribosomal protein</keyword>
<dbReference type="EMBL" id="CP001205">
    <property type="protein sequence ID" value="ACK74642.1"/>
    <property type="molecule type" value="Genomic_DNA"/>
</dbReference>
<dbReference type="RefSeq" id="WP_002556787.1">
    <property type="nucleotide sequence ID" value="NC_011728.1"/>
</dbReference>
<dbReference type="SMR" id="B7J1C2"/>
<dbReference type="GeneID" id="56567616"/>
<dbReference type="KEGG" id="bbz:BbuZS7_0189"/>
<dbReference type="HOGENOM" id="CLU_169643_1_1_12"/>
<dbReference type="Proteomes" id="UP000006901">
    <property type="component" value="Chromosome"/>
</dbReference>
<dbReference type="GO" id="GO:0022625">
    <property type="term" value="C:cytosolic large ribosomal subunit"/>
    <property type="evidence" value="ECO:0007669"/>
    <property type="project" value="TreeGrafter"/>
</dbReference>
<dbReference type="GO" id="GO:0003735">
    <property type="term" value="F:structural constituent of ribosome"/>
    <property type="evidence" value="ECO:0007669"/>
    <property type="project" value="InterPro"/>
</dbReference>
<dbReference type="GO" id="GO:0006412">
    <property type="term" value="P:translation"/>
    <property type="evidence" value="ECO:0007669"/>
    <property type="project" value="UniProtKB-UniRule"/>
</dbReference>
<dbReference type="FunFam" id="4.10.410.60:FF:000001">
    <property type="entry name" value="50S ribosomal protein L35"/>
    <property type="match status" value="1"/>
</dbReference>
<dbReference type="Gene3D" id="4.10.410.60">
    <property type="match status" value="1"/>
</dbReference>
<dbReference type="HAMAP" id="MF_00514">
    <property type="entry name" value="Ribosomal_bL35"/>
    <property type="match status" value="1"/>
</dbReference>
<dbReference type="InterPro" id="IPR001706">
    <property type="entry name" value="Ribosomal_bL35"/>
</dbReference>
<dbReference type="InterPro" id="IPR021137">
    <property type="entry name" value="Ribosomal_bL35-like"/>
</dbReference>
<dbReference type="InterPro" id="IPR018265">
    <property type="entry name" value="Ribosomal_bL35_CS"/>
</dbReference>
<dbReference type="InterPro" id="IPR037229">
    <property type="entry name" value="Ribosomal_bL35_sf"/>
</dbReference>
<dbReference type="NCBIfam" id="TIGR00001">
    <property type="entry name" value="rpmI_bact"/>
    <property type="match status" value="1"/>
</dbReference>
<dbReference type="PANTHER" id="PTHR33343">
    <property type="entry name" value="54S RIBOSOMAL PROTEIN BL35M"/>
    <property type="match status" value="1"/>
</dbReference>
<dbReference type="PANTHER" id="PTHR33343:SF1">
    <property type="entry name" value="LARGE RIBOSOMAL SUBUNIT PROTEIN BL35M"/>
    <property type="match status" value="1"/>
</dbReference>
<dbReference type="Pfam" id="PF01632">
    <property type="entry name" value="Ribosomal_L35p"/>
    <property type="match status" value="1"/>
</dbReference>
<dbReference type="PRINTS" id="PR00064">
    <property type="entry name" value="RIBOSOMALL35"/>
</dbReference>
<dbReference type="SUPFAM" id="SSF143034">
    <property type="entry name" value="L35p-like"/>
    <property type="match status" value="1"/>
</dbReference>
<dbReference type="PROSITE" id="PS00936">
    <property type="entry name" value="RIBOSOMAL_L35"/>
    <property type="match status" value="1"/>
</dbReference>
<proteinExistence type="inferred from homology"/>